<accession>Q9C9R3</accession>
<accession>Q7Y226</accession>
<feature type="chain" id="PRO_0000215802" description="Multifunctional methyltransferase subunit TRM112 homolog B">
    <location>
        <begin position="1"/>
        <end position="124"/>
    </location>
</feature>
<feature type="domain" description="TRM112">
    <location>
        <begin position="2"/>
        <end position="120"/>
    </location>
</feature>
<evidence type="ECO:0000250" key="1">
    <source>
        <dbReference type="UniProtKB" id="P53738"/>
    </source>
</evidence>
<evidence type="ECO:0000269" key="2">
    <source>
    </source>
</evidence>
<evidence type="ECO:0000269" key="3">
    <source>
    </source>
</evidence>
<evidence type="ECO:0000303" key="4">
    <source>
    </source>
</evidence>
<evidence type="ECO:0000303" key="5">
    <source>
    </source>
</evidence>
<evidence type="ECO:0000305" key="6"/>
<evidence type="ECO:0000312" key="7">
    <source>
        <dbReference type="Araport" id="AT1G78190"/>
    </source>
</evidence>
<evidence type="ECO:0000312" key="8">
    <source>
        <dbReference type="EMBL" id="AAG52099.1"/>
    </source>
</evidence>
<sequence length="124" mass="14262">MRLIVHNMLSCNIKGVVNKFPLRIEAEKVTVKEVDFNPDFLRYMFAKIDWKALVDGARSMEYTELPDNAPDTTTLESDETFLRKFHHALLELHLEEGSLVCPETGRKFSVSKGIPNMLLHEDEV</sequence>
<reference key="1">
    <citation type="journal article" date="2000" name="Nature">
        <title>Sequence and analysis of chromosome 1 of the plant Arabidopsis thaliana.</title>
        <authorList>
            <person name="Theologis A."/>
            <person name="Ecker J.R."/>
            <person name="Palm C.J."/>
            <person name="Federspiel N.A."/>
            <person name="Kaul S."/>
            <person name="White O."/>
            <person name="Alonso J."/>
            <person name="Altafi H."/>
            <person name="Araujo R."/>
            <person name="Bowman C.L."/>
            <person name="Brooks S.Y."/>
            <person name="Buehler E."/>
            <person name="Chan A."/>
            <person name="Chao Q."/>
            <person name="Chen H."/>
            <person name="Cheuk R.F."/>
            <person name="Chin C.W."/>
            <person name="Chung M.K."/>
            <person name="Conn L."/>
            <person name="Conway A.B."/>
            <person name="Conway A.R."/>
            <person name="Creasy T.H."/>
            <person name="Dewar K."/>
            <person name="Dunn P."/>
            <person name="Etgu P."/>
            <person name="Feldblyum T.V."/>
            <person name="Feng J.-D."/>
            <person name="Fong B."/>
            <person name="Fujii C.Y."/>
            <person name="Gill J.E."/>
            <person name="Goldsmith A.D."/>
            <person name="Haas B."/>
            <person name="Hansen N.F."/>
            <person name="Hughes B."/>
            <person name="Huizar L."/>
            <person name="Hunter J.L."/>
            <person name="Jenkins J."/>
            <person name="Johnson-Hopson C."/>
            <person name="Khan S."/>
            <person name="Khaykin E."/>
            <person name="Kim C.J."/>
            <person name="Koo H.L."/>
            <person name="Kremenetskaia I."/>
            <person name="Kurtz D.B."/>
            <person name="Kwan A."/>
            <person name="Lam B."/>
            <person name="Langin-Hooper S."/>
            <person name="Lee A."/>
            <person name="Lee J.M."/>
            <person name="Lenz C.A."/>
            <person name="Li J.H."/>
            <person name="Li Y.-P."/>
            <person name="Lin X."/>
            <person name="Liu S.X."/>
            <person name="Liu Z.A."/>
            <person name="Luros J.S."/>
            <person name="Maiti R."/>
            <person name="Marziali A."/>
            <person name="Militscher J."/>
            <person name="Miranda M."/>
            <person name="Nguyen M."/>
            <person name="Nierman W.C."/>
            <person name="Osborne B.I."/>
            <person name="Pai G."/>
            <person name="Peterson J."/>
            <person name="Pham P.K."/>
            <person name="Rizzo M."/>
            <person name="Rooney T."/>
            <person name="Rowley D."/>
            <person name="Sakano H."/>
            <person name="Salzberg S.L."/>
            <person name="Schwartz J.R."/>
            <person name="Shinn P."/>
            <person name="Southwick A.M."/>
            <person name="Sun H."/>
            <person name="Tallon L.J."/>
            <person name="Tambunga G."/>
            <person name="Toriumi M.J."/>
            <person name="Town C.D."/>
            <person name="Utterback T."/>
            <person name="Van Aken S."/>
            <person name="Vaysberg M."/>
            <person name="Vysotskaia V.S."/>
            <person name="Walker M."/>
            <person name="Wu D."/>
            <person name="Yu G."/>
            <person name="Fraser C.M."/>
            <person name="Venter J.C."/>
            <person name="Davis R.W."/>
        </authorList>
    </citation>
    <scope>NUCLEOTIDE SEQUENCE [LARGE SCALE GENOMIC DNA]</scope>
    <source>
        <strain>cv. Columbia</strain>
    </source>
</reference>
<reference key="2">
    <citation type="journal article" date="2017" name="Plant J.">
        <title>Araport11: a complete reannotation of the Arabidopsis thaliana reference genome.</title>
        <authorList>
            <person name="Cheng C.Y."/>
            <person name="Krishnakumar V."/>
            <person name="Chan A.P."/>
            <person name="Thibaud-Nissen F."/>
            <person name="Schobel S."/>
            <person name="Town C.D."/>
        </authorList>
    </citation>
    <scope>GENOME REANNOTATION</scope>
    <source>
        <strain>cv. Columbia</strain>
    </source>
</reference>
<reference key="3">
    <citation type="journal article" date="2003" name="Science">
        <title>Empirical analysis of transcriptional activity in the Arabidopsis genome.</title>
        <authorList>
            <person name="Yamada K."/>
            <person name="Lim J."/>
            <person name="Dale J.M."/>
            <person name="Chen H."/>
            <person name="Shinn P."/>
            <person name="Palm C.J."/>
            <person name="Southwick A.M."/>
            <person name="Wu H.C."/>
            <person name="Kim C.J."/>
            <person name="Nguyen M."/>
            <person name="Pham P.K."/>
            <person name="Cheuk R.F."/>
            <person name="Karlin-Newmann G."/>
            <person name="Liu S.X."/>
            <person name="Lam B."/>
            <person name="Sakano H."/>
            <person name="Wu T."/>
            <person name="Yu G."/>
            <person name="Miranda M."/>
            <person name="Quach H.L."/>
            <person name="Tripp M."/>
            <person name="Chang C.H."/>
            <person name="Lee J.M."/>
            <person name="Toriumi M.J."/>
            <person name="Chan M.M."/>
            <person name="Tang C.C."/>
            <person name="Onodera C.S."/>
            <person name="Deng J.M."/>
            <person name="Akiyama K."/>
            <person name="Ansari Y."/>
            <person name="Arakawa T."/>
            <person name="Banh J."/>
            <person name="Banno F."/>
            <person name="Bowser L."/>
            <person name="Brooks S.Y."/>
            <person name="Carninci P."/>
            <person name="Chao Q."/>
            <person name="Choy N."/>
            <person name="Enju A."/>
            <person name="Goldsmith A.D."/>
            <person name="Gurjal M."/>
            <person name="Hansen N.F."/>
            <person name="Hayashizaki Y."/>
            <person name="Johnson-Hopson C."/>
            <person name="Hsuan V.W."/>
            <person name="Iida K."/>
            <person name="Karnes M."/>
            <person name="Khan S."/>
            <person name="Koesema E."/>
            <person name="Ishida J."/>
            <person name="Jiang P.X."/>
            <person name="Jones T."/>
            <person name="Kawai J."/>
            <person name="Kamiya A."/>
            <person name="Meyers C."/>
            <person name="Nakajima M."/>
            <person name="Narusaka M."/>
            <person name="Seki M."/>
            <person name="Sakurai T."/>
            <person name="Satou M."/>
            <person name="Tamse R."/>
            <person name="Vaysberg M."/>
            <person name="Wallender E.K."/>
            <person name="Wong C."/>
            <person name="Yamamura Y."/>
            <person name="Yuan S."/>
            <person name="Shinozaki K."/>
            <person name="Davis R.W."/>
            <person name="Theologis A."/>
            <person name="Ecker J.R."/>
        </authorList>
    </citation>
    <scope>NUCLEOTIDE SEQUENCE [LARGE SCALE MRNA] OF 8-124</scope>
    <source>
        <strain>cv. Columbia</strain>
    </source>
</reference>
<reference key="4">
    <citation type="journal article" date="2010" name="Plant J.">
        <title>The Arabidopsis SMO2, a homologue of yeast TRM112, modulates progression of cell division during organ growth.</title>
        <authorList>
            <person name="Hu Z."/>
            <person name="Qin Z."/>
            <person name="Wang M."/>
            <person name="Xu C."/>
            <person name="Feng G."/>
            <person name="Liu J."/>
            <person name="Meng Z."/>
            <person name="Hu Y."/>
        </authorList>
    </citation>
    <scope>TISSUE SPECIFICITY</scope>
</reference>
<reference key="5">
    <citation type="journal article" date="2011" name="Nucleic Acids Res.">
        <title>Roles of Trm9- and ALKBH8-like proteins in the formation of modified wobble uridines in Arabidopsis tRNA.</title>
        <authorList>
            <person name="Leihne V."/>
            <person name="Kirpekar F."/>
            <person name="Vaagboe C.B."/>
            <person name="van den Born E."/>
            <person name="Krokan H.E."/>
            <person name="Grini P.E."/>
            <person name="Meza T.J."/>
            <person name="Falnes P.O."/>
        </authorList>
    </citation>
    <scope>FUNCTION</scope>
    <scope>INTERACTION WITH TRM9</scope>
</reference>
<proteinExistence type="evidence at protein level"/>
<name>T112B_ARATH</name>
<protein>
    <recommendedName>
        <fullName evidence="6">Multifunctional methyltransferase subunit TRM112 homolog B</fullName>
    </recommendedName>
    <alternativeName>
        <fullName evidence="6">Multifunctional methyltransferase subunit TRM112-like protein At1g78190</fullName>
    </alternativeName>
    <alternativeName>
        <fullName evidence="4">Protein SMALL ORGAN 2-LIKE</fullName>
    </alternativeName>
    <alternativeName>
        <fullName evidence="6">tRNA methyltransferase 112 homolog B</fullName>
        <shortName evidence="5">AtTRM112b</shortName>
    </alternativeName>
</protein>
<organism>
    <name type="scientific">Arabidopsis thaliana</name>
    <name type="common">Mouse-ear cress</name>
    <dbReference type="NCBI Taxonomy" id="3702"/>
    <lineage>
        <taxon>Eukaryota</taxon>
        <taxon>Viridiplantae</taxon>
        <taxon>Streptophyta</taxon>
        <taxon>Embryophyta</taxon>
        <taxon>Tracheophyta</taxon>
        <taxon>Spermatophyta</taxon>
        <taxon>Magnoliopsida</taxon>
        <taxon>eudicotyledons</taxon>
        <taxon>Gunneridae</taxon>
        <taxon>Pentapetalae</taxon>
        <taxon>rosids</taxon>
        <taxon>malvids</taxon>
        <taxon>Brassicales</taxon>
        <taxon>Brassicaceae</taxon>
        <taxon>Camelineae</taxon>
        <taxon>Arabidopsis</taxon>
    </lineage>
</organism>
<gene>
    <name evidence="5" type="primary">TRM112B</name>
    <name evidence="4" type="synonym">SMO2L</name>
    <name evidence="7" type="ordered locus">At1g78190</name>
    <name evidence="8" type="ORF">T11I11.13</name>
</gene>
<keyword id="KW-1185">Reference proteome</keyword>
<comment type="function">
    <text evidence="1 3">Acts as an activator of both rRNA/tRNA and protein methyltransferases (By similarity). Required for TRM9 tRNA methyltransferase activity (PubMed:21653555).</text>
</comment>
<comment type="subunit">
    <text evidence="3">Interacts with TRM9.</text>
</comment>
<comment type="tissue specificity">
    <text evidence="2">Expressed in anthers.</text>
</comment>
<comment type="similarity">
    <text evidence="6">Belongs to the TRM112 family.</text>
</comment>
<dbReference type="EMBL" id="AC012680">
    <property type="protein sequence ID" value="AAG52099.1"/>
    <property type="molecule type" value="Genomic_DNA"/>
</dbReference>
<dbReference type="EMBL" id="CP002684">
    <property type="protein sequence ID" value="AEE36079.1"/>
    <property type="molecule type" value="Genomic_DNA"/>
</dbReference>
<dbReference type="EMBL" id="BT008329">
    <property type="protein sequence ID" value="AAP37688.1"/>
    <property type="molecule type" value="mRNA"/>
</dbReference>
<dbReference type="PIR" id="C96811">
    <property type="entry name" value="C96811"/>
</dbReference>
<dbReference type="RefSeq" id="NP_177943.1">
    <property type="nucleotide sequence ID" value="NM_106469.1"/>
</dbReference>
<dbReference type="SMR" id="Q9C9R3"/>
<dbReference type="FunCoup" id="Q9C9R3">
    <property type="interactions" value="3598"/>
</dbReference>
<dbReference type="STRING" id="3702.Q9C9R3"/>
<dbReference type="PaxDb" id="3702-AT1G78190.1"/>
<dbReference type="ProteomicsDB" id="234110"/>
<dbReference type="EnsemblPlants" id="AT1G78190.1">
    <property type="protein sequence ID" value="AT1G78190.1"/>
    <property type="gene ID" value="AT1G78190"/>
</dbReference>
<dbReference type="GeneID" id="844155"/>
<dbReference type="Gramene" id="AT1G78190.1">
    <property type="protein sequence ID" value="AT1G78190.1"/>
    <property type="gene ID" value="AT1G78190"/>
</dbReference>
<dbReference type="KEGG" id="ath:AT1G78190"/>
<dbReference type="Araport" id="AT1G78190"/>
<dbReference type="TAIR" id="AT1G78190">
    <property type="gene designation" value="TRM112A"/>
</dbReference>
<dbReference type="eggNOG" id="KOG1088">
    <property type="taxonomic scope" value="Eukaryota"/>
</dbReference>
<dbReference type="HOGENOM" id="CLU_086140_2_0_1"/>
<dbReference type="InParanoid" id="Q9C9R3"/>
<dbReference type="OMA" id="PHFVEWA"/>
<dbReference type="OrthoDB" id="2187549at2759"/>
<dbReference type="PhylomeDB" id="Q9C9R3"/>
<dbReference type="PRO" id="PR:Q9C9R3"/>
<dbReference type="Proteomes" id="UP000006548">
    <property type="component" value="Chromosome 1"/>
</dbReference>
<dbReference type="ExpressionAtlas" id="Q9C9R3">
    <property type="expression patterns" value="baseline and differential"/>
</dbReference>
<dbReference type="GO" id="GO:0046982">
    <property type="term" value="F:protein heterodimerization activity"/>
    <property type="evidence" value="ECO:0007669"/>
    <property type="project" value="InterPro"/>
</dbReference>
<dbReference type="CDD" id="cd21089">
    <property type="entry name" value="Trm112-like"/>
    <property type="match status" value="1"/>
</dbReference>
<dbReference type="FunFam" id="2.20.25.10:FF:000018">
    <property type="entry name" value="Multifunctional methyltransferase subunit TRM112-like B"/>
    <property type="match status" value="1"/>
</dbReference>
<dbReference type="Gene3D" id="2.20.25.10">
    <property type="match status" value="1"/>
</dbReference>
<dbReference type="InterPro" id="IPR039127">
    <property type="entry name" value="Trm112"/>
</dbReference>
<dbReference type="InterPro" id="IPR005651">
    <property type="entry name" value="Trm112-like"/>
</dbReference>
<dbReference type="PANTHER" id="PTHR12773:SF3">
    <property type="entry name" value="MULTIFUNCTIONAL METHYLTRANSFERASE SUBUNIT TRM112 HOMOLOG B"/>
    <property type="match status" value="1"/>
</dbReference>
<dbReference type="PANTHER" id="PTHR12773">
    <property type="entry name" value="UPF0315 PROTEIN-RELATED"/>
    <property type="match status" value="1"/>
</dbReference>
<dbReference type="Pfam" id="PF03966">
    <property type="entry name" value="Trm112p"/>
    <property type="match status" value="1"/>
</dbReference>
<dbReference type="SUPFAM" id="SSF158997">
    <property type="entry name" value="Trm112p-like"/>
    <property type="match status" value="1"/>
</dbReference>